<gene>
    <name evidence="1" type="primary">tilS</name>
    <name type="ordered locus">FTW_0715</name>
</gene>
<keyword id="KW-0067">ATP-binding</keyword>
<keyword id="KW-0963">Cytoplasm</keyword>
<keyword id="KW-0436">Ligase</keyword>
<keyword id="KW-0547">Nucleotide-binding</keyword>
<keyword id="KW-0819">tRNA processing</keyword>
<comment type="function">
    <text evidence="1">Ligates lysine onto the cytidine present at position 34 of the AUA codon-specific tRNA(Ile) that contains the anticodon CAU, in an ATP-dependent manner. Cytidine is converted to lysidine, thus changing the amino acid specificity of the tRNA from methionine to isoleucine.</text>
</comment>
<comment type="catalytic activity">
    <reaction evidence="1">
        <text>cytidine(34) in tRNA(Ile2) + L-lysine + ATP = lysidine(34) in tRNA(Ile2) + AMP + diphosphate + H(+)</text>
        <dbReference type="Rhea" id="RHEA:43744"/>
        <dbReference type="Rhea" id="RHEA-COMP:10625"/>
        <dbReference type="Rhea" id="RHEA-COMP:10670"/>
        <dbReference type="ChEBI" id="CHEBI:15378"/>
        <dbReference type="ChEBI" id="CHEBI:30616"/>
        <dbReference type="ChEBI" id="CHEBI:32551"/>
        <dbReference type="ChEBI" id="CHEBI:33019"/>
        <dbReference type="ChEBI" id="CHEBI:82748"/>
        <dbReference type="ChEBI" id="CHEBI:83665"/>
        <dbReference type="ChEBI" id="CHEBI:456215"/>
        <dbReference type="EC" id="6.3.4.19"/>
    </reaction>
</comment>
<comment type="subcellular location">
    <subcellularLocation>
        <location evidence="1">Cytoplasm</location>
    </subcellularLocation>
</comment>
<comment type="domain">
    <text>The N-terminal region contains the highly conserved SGGXDS motif, predicted to be a P-loop motif involved in ATP binding.</text>
</comment>
<comment type="similarity">
    <text evidence="1">Belongs to the tRNA(Ile)-lysidine synthase family.</text>
</comment>
<proteinExistence type="inferred from homology"/>
<organism>
    <name type="scientific">Francisella tularensis subsp. tularensis (strain WY96-3418)</name>
    <dbReference type="NCBI Taxonomy" id="418136"/>
    <lineage>
        <taxon>Bacteria</taxon>
        <taxon>Pseudomonadati</taxon>
        <taxon>Pseudomonadota</taxon>
        <taxon>Gammaproteobacteria</taxon>
        <taxon>Thiotrichales</taxon>
        <taxon>Francisellaceae</taxon>
        <taxon>Francisella</taxon>
    </lineage>
</organism>
<feature type="chain" id="PRO_1000065615" description="tRNA(Ile)-lysidine synthase">
    <location>
        <begin position="1"/>
        <end position="398"/>
    </location>
</feature>
<feature type="binding site" evidence="1">
    <location>
        <begin position="25"/>
        <end position="30"/>
    </location>
    <ligand>
        <name>ATP</name>
        <dbReference type="ChEBI" id="CHEBI:30616"/>
    </ligand>
</feature>
<name>TILS_FRATW</name>
<evidence type="ECO:0000255" key="1">
    <source>
        <dbReference type="HAMAP-Rule" id="MF_01161"/>
    </source>
</evidence>
<accession>A4IXE6</accession>
<dbReference type="EC" id="6.3.4.19" evidence="1"/>
<dbReference type="EMBL" id="CP000608">
    <property type="protein sequence ID" value="ABO46598.1"/>
    <property type="molecule type" value="Genomic_DNA"/>
</dbReference>
<dbReference type="RefSeq" id="WP_003018488.1">
    <property type="nucleotide sequence ID" value="NC_009257.1"/>
</dbReference>
<dbReference type="SMR" id="A4IXE6"/>
<dbReference type="KEGG" id="ftw:FTW_0715"/>
<dbReference type="HOGENOM" id="CLU_018869_2_0_6"/>
<dbReference type="GO" id="GO:0005737">
    <property type="term" value="C:cytoplasm"/>
    <property type="evidence" value="ECO:0007669"/>
    <property type="project" value="UniProtKB-SubCell"/>
</dbReference>
<dbReference type="GO" id="GO:0005524">
    <property type="term" value="F:ATP binding"/>
    <property type="evidence" value="ECO:0007669"/>
    <property type="project" value="UniProtKB-UniRule"/>
</dbReference>
<dbReference type="GO" id="GO:0032267">
    <property type="term" value="F:tRNA(Ile)-lysidine synthase activity"/>
    <property type="evidence" value="ECO:0007669"/>
    <property type="project" value="UniProtKB-EC"/>
</dbReference>
<dbReference type="GO" id="GO:0006400">
    <property type="term" value="P:tRNA modification"/>
    <property type="evidence" value="ECO:0007669"/>
    <property type="project" value="UniProtKB-UniRule"/>
</dbReference>
<dbReference type="CDD" id="cd01992">
    <property type="entry name" value="TilS_N"/>
    <property type="match status" value="1"/>
</dbReference>
<dbReference type="Gene3D" id="3.40.50.620">
    <property type="entry name" value="HUPs"/>
    <property type="match status" value="1"/>
</dbReference>
<dbReference type="HAMAP" id="MF_01161">
    <property type="entry name" value="tRNA_Ile_lys_synt"/>
    <property type="match status" value="1"/>
</dbReference>
<dbReference type="InterPro" id="IPR012796">
    <property type="entry name" value="Lysidine-tRNA-synth_C"/>
</dbReference>
<dbReference type="InterPro" id="IPR014729">
    <property type="entry name" value="Rossmann-like_a/b/a_fold"/>
</dbReference>
<dbReference type="InterPro" id="IPR011063">
    <property type="entry name" value="TilS/TtcA_N"/>
</dbReference>
<dbReference type="InterPro" id="IPR012094">
    <property type="entry name" value="tRNA_Ile_lys_synt"/>
</dbReference>
<dbReference type="InterPro" id="IPR012795">
    <property type="entry name" value="tRNA_Ile_lys_synt_N"/>
</dbReference>
<dbReference type="InterPro" id="IPR015262">
    <property type="entry name" value="tRNA_Ile_lys_synt_subst-bd"/>
</dbReference>
<dbReference type="NCBIfam" id="TIGR02433">
    <property type="entry name" value="lysidine_TilS_C"/>
    <property type="match status" value="1"/>
</dbReference>
<dbReference type="NCBIfam" id="TIGR02432">
    <property type="entry name" value="lysidine_TilS_N"/>
    <property type="match status" value="1"/>
</dbReference>
<dbReference type="PANTHER" id="PTHR43033">
    <property type="entry name" value="TRNA(ILE)-LYSIDINE SYNTHASE-RELATED"/>
    <property type="match status" value="1"/>
</dbReference>
<dbReference type="PANTHER" id="PTHR43033:SF1">
    <property type="entry name" value="TRNA(ILE)-LYSIDINE SYNTHASE-RELATED"/>
    <property type="match status" value="1"/>
</dbReference>
<dbReference type="Pfam" id="PF01171">
    <property type="entry name" value="ATP_bind_3"/>
    <property type="match status" value="1"/>
</dbReference>
<dbReference type="Pfam" id="PF09179">
    <property type="entry name" value="TilS"/>
    <property type="match status" value="1"/>
</dbReference>
<dbReference type="Pfam" id="PF11734">
    <property type="entry name" value="TilS_C"/>
    <property type="match status" value="1"/>
</dbReference>
<dbReference type="SMART" id="SM00977">
    <property type="entry name" value="TilS_C"/>
    <property type="match status" value="1"/>
</dbReference>
<dbReference type="SUPFAM" id="SSF52402">
    <property type="entry name" value="Adenine nucleotide alpha hydrolases-like"/>
    <property type="match status" value="1"/>
</dbReference>
<dbReference type="SUPFAM" id="SSF82829">
    <property type="entry name" value="MesJ substrate recognition domain-like"/>
    <property type="match status" value="1"/>
</dbReference>
<dbReference type="SUPFAM" id="SSF56037">
    <property type="entry name" value="PheT/TilS domain"/>
    <property type="match status" value="1"/>
</dbReference>
<protein>
    <recommendedName>
        <fullName evidence="1">tRNA(Ile)-lysidine synthase</fullName>
        <ecNumber evidence="1">6.3.4.19</ecNumber>
    </recommendedName>
    <alternativeName>
        <fullName evidence="1">tRNA(Ile)-2-lysyl-cytidine synthase</fullName>
    </alternativeName>
    <alternativeName>
        <fullName evidence="1">tRNA(Ile)-lysidine synthetase</fullName>
    </alternativeName>
</protein>
<sequence>MSISKSLVLNEIKKFSPSHIIIGYSGGVDSSVLLNISKELDIPLIAIYINHNLHRDSLKWQIHCQQTCQKYNLQFISHSLDKVPKGESFEAWASKQRMAFFQKIMQQYSKPLLLLGHHQDDQAETFLIQAIRGSGLAGLAGIPHYKELHHGGVLRPLLKYSKIEIEGFAKLNNISYIYDDSNEDIKYRRNLIRNQIIPILQQVNPNISQTLSRSANICAESNNILQKLLTERLQSISQDTNLIISELIKLDDDIQKNLLHLWFKQNTQQSLKSKQIKELHLAVNNPSTGWQIDISNYYQIHIQYNQLIIKYPTTINDISKEDIISWLSKNLNEEIDLTKIVIRDRKPDDKCKYRGRNKPNKLKILFQELQIPTTERSKAKIILKDQQIIAVYPFFICG</sequence>
<reference key="1">
    <citation type="journal article" date="2007" name="PLoS ONE">
        <title>Complete genomic characterization of a pathogenic A.II strain of Francisella tularensis subspecies tularensis.</title>
        <authorList>
            <person name="Beckstrom-Sternberg S.M."/>
            <person name="Auerbach R.K."/>
            <person name="Godbole S."/>
            <person name="Pearson J.V."/>
            <person name="Beckstrom-Sternberg J.S."/>
            <person name="Deng Z."/>
            <person name="Munk C."/>
            <person name="Kubota K."/>
            <person name="Zhou Y."/>
            <person name="Bruce D."/>
            <person name="Noronha J."/>
            <person name="Scheuermann R.H."/>
            <person name="Wang A."/>
            <person name="Wei X."/>
            <person name="Wang J."/>
            <person name="Hao J."/>
            <person name="Wagner D.M."/>
            <person name="Brettin T.S."/>
            <person name="Brown N."/>
            <person name="Gilna P."/>
            <person name="Keim P.S."/>
        </authorList>
    </citation>
    <scope>NUCLEOTIDE SEQUENCE [LARGE SCALE GENOMIC DNA]</scope>
    <source>
        <strain>WY96-3418</strain>
    </source>
</reference>